<reference key="1">
    <citation type="journal article" date="1996" name="EMBO J.">
        <title>Complete nucleotide sequence of Saccharomyces cerevisiae chromosome X.</title>
        <authorList>
            <person name="Galibert F."/>
            <person name="Alexandraki D."/>
            <person name="Baur A."/>
            <person name="Boles E."/>
            <person name="Chalwatzis N."/>
            <person name="Chuat J.-C."/>
            <person name="Coster F."/>
            <person name="Cziepluch C."/>
            <person name="de Haan M."/>
            <person name="Domdey H."/>
            <person name="Durand P."/>
            <person name="Entian K.-D."/>
            <person name="Gatius M."/>
            <person name="Goffeau A."/>
            <person name="Grivell L.A."/>
            <person name="Hennemann A."/>
            <person name="Herbert C.J."/>
            <person name="Heumann K."/>
            <person name="Hilger F."/>
            <person name="Hollenberg C.P."/>
            <person name="Huang M.-E."/>
            <person name="Jacq C."/>
            <person name="Jauniaux J.-C."/>
            <person name="Katsoulou C."/>
            <person name="Kirchrath L."/>
            <person name="Kleine K."/>
            <person name="Kordes E."/>
            <person name="Koetter P."/>
            <person name="Liebl S."/>
            <person name="Louis E.J."/>
            <person name="Manus V."/>
            <person name="Mewes H.-W."/>
            <person name="Miosga T."/>
            <person name="Obermaier B."/>
            <person name="Perea J."/>
            <person name="Pohl T.M."/>
            <person name="Portetelle D."/>
            <person name="Pujol A."/>
            <person name="Purnelle B."/>
            <person name="Ramezani Rad M."/>
            <person name="Rasmussen S.W."/>
            <person name="Rose M."/>
            <person name="Rossau R."/>
            <person name="Schaaff-Gerstenschlaeger I."/>
            <person name="Smits P.H.M."/>
            <person name="Scarcez T."/>
            <person name="Soriano N."/>
            <person name="To Van D."/>
            <person name="Tzermia M."/>
            <person name="Van Broekhoven A."/>
            <person name="Vandenbol M."/>
            <person name="Wedler H."/>
            <person name="von Wettstein D."/>
            <person name="Wambutt R."/>
            <person name="Zagulski M."/>
            <person name="Zollner A."/>
            <person name="Karpfinger-Hartl L."/>
        </authorList>
    </citation>
    <scope>NUCLEOTIDE SEQUENCE [LARGE SCALE GENOMIC DNA]</scope>
    <source>
        <strain>ATCC 204508 / S288c</strain>
    </source>
</reference>
<reference key="2">
    <citation type="journal article" date="2014" name="G3 (Bethesda)">
        <title>The reference genome sequence of Saccharomyces cerevisiae: Then and now.</title>
        <authorList>
            <person name="Engel S.R."/>
            <person name="Dietrich F.S."/>
            <person name="Fisk D.G."/>
            <person name="Binkley G."/>
            <person name="Balakrishnan R."/>
            <person name="Costanzo M.C."/>
            <person name="Dwight S.S."/>
            <person name="Hitz B.C."/>
            <person name="Karra K."/>
            <person name="Nash R.S."/>
            <person name="Weng S."/>
            <person name="Wong E.D."/>
            <person name="Lloyd P."/>
            <person name="Skrzypek M.S."/>
            <person name="Miyasato S.R."/>
            <person name="Simison M."/>
            <person name="Cherry J.M."/>
        </authorList>
    </citation>
    <scope>GENOME REANNOTATION</scope>
    <source>
        <strain>ATCC 204508 / S288c</strain>
    </source>
</reference>
<reference key="3">
    <citation type="journal article" date="1997" name="Mol. Cell. Biol.">
        <title>Zap1p, a metalloregulatory protein involved in zinc-responsive transcriptional regulation in Saccharomyces cerevisiae.</title>
        <authorList>
            <person name="Zhao H."/>
            <person name="Eide D.J."/>
        </authorList>
    </citation>
    <scope>FUNCTION</scope>
    <scope>MUTAGENESIS OF CYS-203</scope>
    <scope>INDUCTION</scope>
</reference>
<reference key="4">
    <citation type="journal article" date="1998" name="J. Biol. Chem.">
        <title>Regulation of zinc homeostasis in yeast by binding of the ZAP1 transcriptional activator to zinc-responsive promoter elements.</title>
        <authorList>
            <person name="Zhao H."/>
            <person name="Butler E."/>
            <person name="Rodgers J."/>
            <person name="Spizzo T."/>
            <person name="Duesterhoeft S."/>
            <person name="Eide D."/>
        </authorList>
    </citation>
    <scope>FUNCTION</scope>
    <scope>DNA-BINDING</scope>
</reference>
<reference key="5">
    <citation type="journal article" date="2000" name="EMBO J.">
        <title>A dual role for zinc fingers in both DNA binding and zinc sensing by the Zap1 transcriptional activator.</title>
        <authorList>
            <person name="Bird A.J."/>
            <person name="Zhao H."/>
            <person name="Luo H."/>
            <person name="Jensen L.T."/>
            <person name="Srinivasan C."/>
            <person name="Evans-Galea M."/>
            <person name="Winge D.R."/>
            <person name="Eide D.J."/>
        </authorList>
    </citation>
    <scope>DOMAIN</scope>
    <scope>SUBCELLULAR LOCATION</scope>
    <scope>DNA-BINDING</scope>
</reference>
<reference key="6">
    <citation type="journal article" date="2003" name="Biochemistry">
        <title>Two of the five zinc fingers in the Zap1 transcription factor DNA binding domain dominate site-specific DNA binding.</title>
        <authorList>
            <person name="Evans-Galea M.V."/>
            <person name="Blankman E."/>
            <person name="Myszka D.G."/>
            <person name="Bird A.J."/>
            <person name="Eide D.J."/>
            <person name="Winge D.R."/>
        </authorList>
    </citation>
    <scope>DOMAIN</scope>
    <scope>DNA-BINDING</scope>
</reference>
<reference key="7">
    <citation type="journal article" date="2003" name="EMBO J.">
        <title>Zinc fingers can act as Zn2+ sensors to regulate transcriptional activation domain function.</title>
        <authorList>
            <person name="Bird A.J."/>
            <person name="McCall K."/>
            <person name="Kramer M."/>
            <person name="Blankman E."/>
            <person name="Winge D.R."/>
            <person name="Eide D.J."/>
        </authorList>
    </citation>
    <scope>DOMAIN</scope>
    <scope>ACTIVITY REGULATION</scope>
</reference>
<reference key="8">
    <citation type="journal article" date="2005" name="Mol. Microbiol.">
        <title>Zap1 activation domain 1 and its role in controlling gene expression in response to cellular zinc status.</title>
        <authorList>
            <person name="Herbig A."/>
            <person name="Bird A.J."/>
            <person name="Swierczek S."/>
            <person name="McCall K."/>
            <person name="Mooney M."/>
            <person name="Wu C.Y."/>
            <person name="Winge D.R."/>
            <person name="Eide D.J."/>
        </authorList>
    </citation>
    <scope>DOMAIN</scope>
    <scope>MUTAGENESIS OF CYS-202; CYS-203 AND HIS-207</scope>
</reference>
<reference key="9">
    <citation type="journal article" date="2006" name="Proc. Natl. Acad. Sci. U.S.A.">
        <title>Zinc binding to a regulatory zinc-sensing domain monitored in vivo by using FRET.</title>
        <authorList>
            <person name="Qiao W."/>
            <person name="Mooney M."/>
            <person name="Bird A.J."/>
            <person name="Winge D.R."/>
            <person name="Eide D.J."/>
        </authorList>
    </citation>
    <scope>DOMAIN</scope>
</reference>
<reference key="10">
    <citation type="journal article" date="2009" name="Science">
        <title>Global analysis of Cdk1 substrate phosphorylation sites provides insights into evolution.</title>
        <authorList>
            <person name="Holt L.J."/>
            <person name="Tuch B.B."/>
            <person name="Villen J."/>
            <person name="Johnson A.D."/>
            <person name="Gygi S.P."/>
            <person name="Morgan D.O."/>
        </authorList>
    </citation>
    <scope>PHOSPHORYLATION [LARGE SCALE ANALYSIS] AT SER-156; SER-166 AND SER-515</scope>
    <scope>IDENTIFICATION BY MASS SPECTROMETRY [LARGE SCALE ANALYSIS]</scope>
</reference>
<reference key="11">
    <citation type="journal article" date="2011" name="J. Biol. Chem.">
        <title>Roles of two activation domains in Zap1 in the response to zinc deficiency in Saccharomyces cerevisiae.</title>
        <authorList>
            <person name="Frey A.G."/>
            <person name="Eide D.J."/>
        </authorList>
    </citation>
    <scope>DOMAIN</scope>
</reference>
<reference key="12">
    <citation type="journal article" date="2011" name="PLoS ONE">
        <title>Zinc-regulated DNA binding of the yeast Zap1 zinc-responsive activator.</title>
        <authorList>
            <person name="Frey A.G."/>
            <person name="Bird A.J."/>
            <person name="Evans-Galea M.V."/>
            <person name="Blankman E."/>
            <person name="Winge D.R."/>
            <person name="Eide D.J."/>
        </authorList>
    </citation>
    <scope>DNA-BINDING</scope>
    <scope>SUBCELLULAR LOCATION</scope>
</reference>
<reference key="13">
    <citation type="journal article" date="2012" name="MicrobiologyOpen">
        <title>Zinc-responsive coactivator recruitment by the yeast Zap1 transcription factor.</title>
        <authorList>
            <person name="Frey A.G."/>
            <person name="Eide D.J."/>
        </authorList>
    </citation>
    <scope>FUNCTION</scope>
</reference>
<reference key="14">
    <citation type="journal article" date="2016" name="Mol. Microbiol.">
        <title>ZAP1-mediated modulation of triacylglycerol levels in yeast by transcriptional control of mitochondrial fatty acid biosynthesis.</title>
        <authorList>
            <person name="Singh N."/>
            <person name="Yadav K.K."/>
            <person name="Rajasekharan R."/>
        </authorList>
    </citation>
    <scope>FUNCTION</scope>
</reference>
<reference evidence="19" key="15">
    <citation type="journal article" date="2006" name="J. Mol. Biol.">
        <title>Solution structure of a Zap1 zinc-responsive domain provides insights into metalloregulatory transcriptional repression in Saccharomyces cerevisiae.</title>
        <authorList>
            <person name="Wang Z."/>
            <person name="Feng L.S."/>
            <person name="Matskevich V."/>
            <person name="Venkataraman K."/>
            <person name="Parasuram P."/>
            <person name="Laity J.H."/>
        </authorList>
    </citation>
    <scope>STRUCTURE BY NMR OF 578-641</scope>
</reference>
<evidence type="ECO:0000255" key="1">
    <source>
        <dbReference type="PROSITE-ProRule" id="PRU00042"/>
    </source>
</evidence>
<evidence type="ECO:0000256" key="2">
    <source>
        <dbReference type="SAM" id="MobiDB-lite"/>
    </source>
</evidence>
<evidence type="ECO:0000269" key="3">
    <source>
    </source>
</evidence>
<evidence type="ECO:0000269" key="4">
    <source>
    </source>
</evidence>
<evidence type="ECO:0000269" key="5">
    <source>
    </source>
</evidence>
<evidence type="ECO:0000269" key="6">
    <source>
    </source>
</evidence>
<evidence type="ECO:0000269" key="7">
    <source>
    </source>
</evidence>
<evidence type="ECO:0000269" key="8">
    <source>
    </source>
</evidence>
<evidence type="ECO:0000269" key="9">
    <source>
    </source>
</evidence>
<evidence type="ECO:0000269" key="10">
    <source>
    </source>
</evidence>
<evidence type="ECO:0000269" key="11">
    <source>
    </source>
</evidence>
<evidence type="ECO:0000269" key="12">
    <source>
    </source>
</evidence>
<evidence type="ECO:0000269" key="13">
    <source>
    </source>
</evidence>
<evidence type="ECO:0000269" key="14">
    <source>
    </source>
</evidence>
<evidence type="ECO:0000305" key="15">
    <source>
    </source>
</evidence>
<evidence type="ECO:0000305" key="16">
    <source>
    </source>
</evidence>
<evidence type="ECO:0000305" key="17">
    <source>
    </source>
</evidence>
<evidence type="ECO:0000305" key="18">
    <source>
    </source>
</evidence>
<evidence type="ECO:0007744" key="19">
    <source>
        <dbReference type="PDB" id="1ZW8"/>
    </source>
</evidence>
<evidence type="ECO:0007744" key="20">
    <source>
    </source>
</evidence>
<evidence type="ECO:0007829" key="21">
    <source>
        <dbReference type="PDB" id="1ZW8"/>
    </source>
</evidence>
<dbReference type="EMBL" id="Z49331">
    <property type="protein sequence ID" value="CAA89347.1"/>
    <property type="molecule type" value="Genomic_DNA"/>
</dbReference>
<dbReference type="EMBL" id="BK006943">
    <property type="protein sequence ID" value="DAA08742.1"/>
    <property type="molecule type" value="Genomic_DNA"/>
</dbReference>
<dbReference type="PIR" id="S56828">
    <property type="entry name" value="S56828"/>
</dbReference>
<dbReference type="RefSeq" id="NP_012479.1">
    <property type="nucleotide sequence ID" value="NM_001181489.1"/>
</dbReference>
<dbReference type="PDB" id="1ZW8">
    <property type="method" value="NMR"/>
    <property type="chains" value="A=578-641"/>
</dbReference>
<dbReference type="PDBsum" id="1ZW8"/>
<dbReference type="SMR" id="P47043"/>
<dbReference type="BioGRID" id="33698">
    <property type="interactions" value="77"/>
</dbReference>
<dbReference type="DIP" id="DIP-1565N"/>
<dbReference type="FunCoup" id="P47043">
    <property type="interactions" value="555"/>
</dbReference>
<dbReference type="IntAct" id="P47043">
    <property type="interactions" value="5"/>
</dbReference>
<dbReference type="MINT" id="P47043"/>
<dbReference type="STRING" id="4932.YJL056C"/>
<dbReference type="GlyGen" id="P47043">
    <property type="glycosylation" value="1 site"/>
</dbReference>
<dbReference type="iPTMnet" id="P47043"/>
<dbReference type="PaxDb" id="4932-YJL056C"/>
<dbReference type="PeptideAtlas" id="P47043"/>
<dbReference type="EnsemblFungi" id="YJL056C_mRNA">
    <property type="protein sequence ID" value="YJL056C"/>
    <property type="gene ID" value="YJL056C"/>
</dbReference>
<dbReference type="GeneID" id="853390"/>
<dbReference type="KEGG" id="sce:YJL056C"/>
<dbReference type="AGR" id="SGD:S000003592"/>
<dbReference type="SGD" id="S000003592">
    <property type="gene designation" value="ZAP1"/>
</dbReference>
<dbReference type="VEuPathDB" id="FungiDB:YJL056C"/>
<dbReference type="eggNOG" id="KOG1721">
    <property type="taxonomic scope" value="Eukaryota"/>
</dbReference>
<dbReference type="GeneTree" id="ENSGT00940000176804"/>
<dbReference type="HOGENOM" id="CLU_014727_0_0_1"/>
<dbReference type="InParanoid" id="P47043"/>
<dbReference type="OMA" id="CQHFEFL"/>
<dbReference type="OrthoDB" id="3437960at2759"/>
<dbReference type="BioCyc" id="YEAST:G3O-31519-MONOMER"/>
<dbReference type="BioGRID-ORCS" id="853390">
    <property type="hits" value="7 hits in 13 CRISPR screens"/>
</dbReference>
<dbReference type="EvolutionaryTrace" id="P47043"/>
<dbReference type="PRO" id="PR:P47043"/>
<dbReference type="Proteomes" id="UP000002311">
    <property type="component" value="Chromosome X"/>
</dbReference>
<dbReference type="RNAct" id="P47043">
    <property type="molecule type" value="protein"/>
</dbReference>
<dbReference type="GO" id="GO:0005634">
    <property type="term" value="C:nucleus"/>
    <property type="evidence" value="ECO:0000314"/>
    <property type="project" value="SGD"/>
</dbReference>
<dbReference type="GO" id="GO:0000981">
    <property type="term" value="F:DNA-binding transcription factor activity, RNA polymerase II-specific"/>
    <property type="evidence" value="ECO:0000314"/>
    <property type="project" value="SGD"/>
</dbReference>
<dbReference type="GO" id="GO:0000978">
    <property type="term" value="F:RNA polymerase II cis-regulatory region sequence-specific DNA binding"/>
    <property type="evidence" value="ECO:0000318"/>
    <property type="project" value="GO_Central"/>
</dbReference>
<dbReference type="GO" id="GO:0000977">
    <property type="term" value="F:RNA polymerase II transcription regulatory region sequence-specific DNA binding"/>
    <property type="evidence" value="ECO:0000314"/>
    <property type="project" value="SGD"/>
</dbReference>
<dbReference type="GO" id="GO:0008270">
    <property type="term" value="F:zinc ion binding"/>
    <property type="evidence" value="ECO:0000314"/>
    <property type="project" value="SGD"/>
</dbReference>
<dbReference type="GO" id="GO:0034224">
    <property type="term" value="P:cellular response to zinc ion starvation"/>
    <property type="evidence" value="ECO:0000314"/>
    <property type="project" value="SGD"/>
</dbReference>
<dbReference type="GO" id="GO:0045944">
    <property type="term" value="P:positive regulation of transcription by RNA polymerase II"/>
    <property type="evidence" value="ECO:0000314"/>
    <property type="project" value="SGD"/>
</dbReference>
<dbReference type="GO" id="GO:0006357">
    <property type="term" value="P:regulation of transcription by RNA polymerase II"/>
    <property type="evidence" value="ECO:0000315"/>
    <property type="project" value="SGD"/>
</dbReference>
<dbReference type="FunFam" id="3.30.160.60:FF:000450">
    <property type="entry name" value="PR domain zinc finger protein 14"/>
    <property type="match status" value="1"/>
</dbReference>
<dbReference type="FunFam" id="3.30.160.60:FF:000557">
    <property type="entry name" value="zinc finger and SCAN domain-containing protein 29"/>
    <property type="match status" value="1"/>
</dbReference>
<dbReference type="FunFam" id="3.30.160.60:FF:001498">
    <property type="entry name" value="Zinc finger protein 404"/>
    <property type="match status" value="1"/>
</dbReference>
<dbReference type="Gene3D" id="6.10.140.370">
    <property type="match status" value="1"/>
</dbReference>
<dbReference type="Gene3D" id="3.30.160.60">
    <property type="entry name" value="Classic Zinc Finger"/>
    <property type="match status" value="5"/>
</dbReference>
<dbReference type="InterPro" id="IPR050329">
    <property type="entry name" value="GLI_C2H2-zinc-finger"/>
</dbReference>
<dbReference type="InterPro" id="IPR048420">
    <property type="entry name" value="Zap1-like_Znf1"/>
</dbReference>
<dbReference type="InterPro" id="IPR040792">
    <property type="entry name" value="Zap1_Znf2"/>
</dbReference>
<dbReference type="InterPro" id="IPR036236">
    <property type="entry name" value="Znf_C2H2_sf"/>
</dbReference>
<dbReference type="InterPro" id="IPR013087">
    <property type="entry name" value="Znf_C2H2_type"/>
</dbReference>
<dbReference type="PANTHER" id="PTHR19818:SF139">
    <property type="entry name" value="PAIR-RULE PROTEIN ODD-PAIRED"/>
    <property type="match status" value="1"/>
</dbReference>
<dbReference type="PANTHER" id="PTHR19818">
    <property type="entry name" value="ZINC FINGER PROTEIN ZIC AND GLI"/>
    <property type="match status" value="1"/>
</dbReference>
<dbReference type="Pfam" id="PF21816">
    <property type="entry name" value="Zap1_zf1"/>
    <property type="match status" value="1"/>
</dbReference>
<dbReference type="Pfam" id="PF18217">
    <property type="entry name" value="Zap1_zf2"/>
    <property type="match status" value="1"/>
</dbReference>
<dbReference type="Pfam" id="PF00096">
    <property type="entry name" value="zf-C2H2"/>
    <property type="match status" value="3"/>
</dbReference>
<dbReference type="Pfam" id="PF13912">
    <property type="entry name" value="zf-C2H2_6"/>
    <property type="match status" value="1"/>
</dbReference>
<dbReference type="SMART" id="SM00355">
    <property type="entry name" value="ZnF_C2H2"/>
    <property type="match status" value="7"/>
</dbReference>
<dbReference type="SUPFAM" id="SSF57667">
    <property type="entry name" value="beta-beta-alpha zinc fingers"/>
    <property type="match status" value="3"/>
</dbReference>
<dbReference type="PROSITE" id="PS00028">
    <property type="entry name" value="ZINC_FINGER_C2H2_1"/>
    <property type="match status" value="6"/>
</dbReference>
<dbReference type="PROSITE" id="PS50157">
    <property type="entry name" value="ZINC_FINGER_C2H2_2"/>
    <property type="match status" value="5"/>
</dbReference>
<sequence length="880" mass="98866">MDALTPRDSPKRDDSMATSAATAASAKPDALTIGKEGIVHGHIHNYNNLTYIHGHLHHSAPVNDSSASATPAAAAVADAATSAFASGASHDMGGDCHVNEKCKEYTDCQHFEFLNYHNNPSLTKYNDTATYNSNNHSFANNFHSVASDPTSPQQNSKSDLPRRKDSWFNDDLILLPSSKKNKPNPPPGSDDCYCTPKILEICCDETHPKSEANIKQGESDQPTKKDISENGNDVAIFTDVKNDHLMPNFNLHDQYCNSTNHDSHNHNNTVPDSFSQLMSHLSEIDCDLTCDTPCTASTSATSGHKFVQDHQSSNNDDVFHKYCKFCEESTDNQPCSKHMHLESKPPQLPPKCSSLRKPTNTLQGTNHAYHEHILNTDMDLKILEDLCNISSLYEVPFGKHINHHDHNNAGNGCDGSSTGNNENGNQTMNLLLSSINRCNPKNNLNGSNNNTAGATSTDHQHHHHRIQFHSHKPNRNNIVNNSGISAANTTADLTNNDLNDLISREYSYERFRNQSEPPSLPKVTHQNQKNRRSWPTKDLESTDFSSLEDSLPSSISPPIQTTSTINFNWCFKEEKNNDLKCKWKECPESCSSLFDLQRHLLKDHVSQDFKHPMEPLACNWEDCDFLGDDTCSIVNHINCQHGINFDIQFANPDSFLPGSISKEKHHLLHCPNPQTHEVSKADGAPDMTSANDVSNIPPIKQPEQVICQWDGCNKSFSSAQELNDHLEAVHLTRGKSEYQCLWHDCHRTFPQRQKLIRHLKVHSKYKPYKCKTCKRCFSSEETLVQHTRTHSGEKPYKCHICNKKFAISSSLKIHIRTHTGEKPLQCKICGKRFNESSNLSKHIKTHQKKYKCSDCSKSFDDLGKLNSQKVKCALERKPYL</sequence>
<keyword id="KW-0002">3D-structure</keyword>
<keyword id="KW-0238">DNA-binding</keyword>
<keyword id="KW-0479">Metal-binding</keyword>
<keyword id="KW-0539">Nucleus</keyword>
<keyword id="KW-0597">Phosphoprotein</keyword>
<keyword id="KW-1185">Reference proteome</keyword>
<keyword id="KW-0677">Repeat</keyword>
<keyword id="KW-0804">Transcription</keyword>
<keyword id="KW-0805">Transcription regulation</keyword>
<keyword id="KW-0862">Zinc</keyword>
<keyword id="KW-0863">Zinc-finger</keyword>
<feature type="chain" id="PRO_0000046859" description="Zinc-responsive transcriptional regulator ZAP1">
    <location>
        <begin position="1"/>
        <end position="880"/>
    </location>
</feature>
<feature type="zinc finger region" description="C2H2-type 1" evidence="1">
    <location>
        <begin position="579"/>
        <end position="604"/>
    </location>
</feature>
<feature type="zinc finger region" description="C2H2-type 2; atypical" evidence="1">
    <location>
        <begin position="616"/>
        <end position="641"/>
    </location>
</feature>
<feature type="DNA-binding region" description="DNA-binding domain" evidence="17">
    <location>
        <begin position="705"/>
        <end position="846"/>
    </location>
</feature>
<feature type="zinc finger region" description="C2H2-type 3" evidence="1">
    <location>
        <begin position="705"/>
        <end position="730"/>
    </location>
</feature>
<feature type="zinc finger region" description="C2H2-type 4" evidence="1">
    <location>
        <begin position="738"/>
        <end position="762"/>
    </location>
</feature>
<feature type="zinc finger region" description="C2H2-type 5" evidence="1">
    <location>
        <begin position="768"/>
        <end position="790"/>
    </location>
</feature>
<feature type="zinc finger region" description="C2H2-type 6" evidence="1">
    <location>
        <begin position="796"/>
        <end position="818"/>
    </location>
</feature>
<feature type="zinc finger region" description="C2H2-type 7" evidence="1">
    <location>
        <begin position="824"/>
        <end position="846"/>
    </location>
</feature>
<feature type="region of interest" description="Disordered" evidence="2">
    <location>
        <begin position="1"/>
        <end position="26"/>
    </location>
</feature>
<feature type="region of interest" description="Disordered" evidence="2">
    <location>
        <begin position="140"/>
        <end position="164"/>
    </location>
</feature>
<feature type="region of interest" description="Zinc-responsive domain 1 (ZRD(AD1))" evidence="16 17 18">
    <location>
        <begin position="182"/>
        <end position="502"/>
    </location>
</feature>
<feature type="region of interest" description="Transcription activation domain 1 (AD1)" evidence="17">
    <location>
        <begin position="207"/>
        <end position="402"/>
    </location>
</feature>
<feature type="region of interest" description="Disordered" evidence="2">
    <location>
        <begin position="436"/>
        <end position="482"/>
    </location>
</feature>
<feature type="region of interest" description="Disordered" evidence="2">
    <location>
        <begin position="510"/>
        <end position="555"/>
    </location>
</feature>
<feature type="region of interest" description="Zinc-responsive domain 2 (ZRD(AD2))" evidence="15 17 18">
    <location>
        <begin position="579"/>
        <end position="641"/>
    </location>
</feature>
<feature type="region of interest" description="Transcription activation domain 2 (AD2)" evidence="17">
    <location>
        <begin position="611"/>
        <end position="640"/>
    </location>
</feature>
<feature type="compositionally biased region" description="Low complexity" evidence="2">
    <location>
        <begin position="17"/>
        <end position="26"/>
    </location>
</feature>
<feature type="compositionally biased region" description="Polar residues" evidence="2">
    <location>
        <begin position="147"/>
        <end position="158"/>
    </location>
</feature>
<feature type="compositionally biased region" description="Low complexity" evidence="2">
    <location>
        <begin position="442"/>
        <end position="456"/>
    </location>
</feature>
<feature type="compositionally biased region" description="Basic residues" evidence="2">
    <location>
        <begin position="460"/>
        <end position="474"/>
    </location>
</feature>
<feature type="compositionally biased region" description="Low complexity" evidence="2">
    <location>
        <begin position="545"/>
        <end position="555"/>
    </location>
</feature>
<feature type="binding site" evidence="7 19">
    <location>
        <position position="581"/>
    </location>
    <ligand>
        <name>Zn(2+)</name>
        <dbReference type="ChEBI" id="CHEBI:29105"/>
        <note>regulatory</note>
    </ligand>
</feature>
<feature type="binding site" evidence="7 19">
    <location>
        <position position="586"/>
    </location>
    <ligand>
        <name>Zn(2+)</name>
        <dbReference type="ChEBI" id="CHEBI:29105"/>
        <note>regulatory</note>
    </ligand>
</feature>
<feature type="binding site" evidence="7 19">
    <location>
        <position position="599"/>
    </location>
    <ligand>
        <name>Zn(2+)</name>
        <dbReference type="ChEBI" id="CHEBI:29105"/>
        <note>regulatory</note>
    </ligand>
</feature>
<feature type="binding site" evidence="7 19">
    <location>
        <position position="604"/>
    </location>
    <ligand>
        <name>Zn(2+)</name>
        <dbReference type="ChEBI" id="CHEBI:29105"/>
        <note>regulatory</note>
    </ligand>
</feature>
<feature type="binding site" evidence="7 19">
    <location>
        <position position="618"/>
    </location>
    <ligand>
        <name>Zn(2+)</name>
        <dbReference type="ChEBI" id="CHEBI:29105"/>
        <note>regulatory</note>
    </ligand>
</feature>
<feature type="binding site" evidence="7 19">
    <location>
        <position position="623"/>
    </location>
    <ligand>
        <name>Zn(2+)</name>
        <dbReference type="ChEBI" id="CHEBI:29105"/>
        <note>regulatory</note>
    </ligand>
</feature>
<feature type="binding site" evidence="7 19">
    <location>
        <position position="636"/>
    </location>
    <ligand>
        <name>Zn(2+)</name>
        <dbReference type="ChEBI" id="CHEBI:29105"/>
        <note>regulatory</note>
    </ligand>
</feature>
<feature type="binding site" evidence="7 19">
    <location>
        <position position="641"/>
    </location>
    <ligand>
        <name>Zn(2+)</name>
        <dbReference type="ChEBI" id="CHEBI:29105"/>
        <note>regulatory</note>
    </ligand>
</feature>
<feature type="modified residue" description="Phosphoserine" evidence="20">
    <location>
        <position position="156"/>
    </location>
</feature>
<feature type="modified residue" description="Phosphoserine" evidence="20">
    <location>
        <position position="166"/>
    </location>
</feature>
<feature type="modified residue" description="Phosphoserine" evidence="20">
    <location>
        <position position="515"/>
    </location>
</feature>
<feature type="mutagenesis site" description="Results in a significant defect in zinc responsiveness; when associated with A-203 and A-207." evidence="6">
    <original>C</original>
    <variation>A</variation>
    <location>
        <position position="202"/>
    </location>
</feature>
<feature type="mutagenesis site" description="Results in a significant defect in zinc responsiveness; when associated with A-202 and A-207." evidence="6">
    <original>C</original>
    <variation>A</variation>
    <location>
        <position position="203"/>
    </location>
</feature>
<feature type="mutagenesis site" description="In ZAP1-1up; interferes with the zinc-dependent repression of the ZRT1 promoter but does not prevent full induction of the ZRT1 gene." evidence="13">
    <original>C</original>
    <variation>S</variation>
    <location>
        <position position="203"/>
    </location>
</feature>
<feature type="mutagenesis site" description="Results in a significant defect in zinc responsiveness; when associated with A-202 and A-203." evidence="6">
    <original>H</original>
    <variation>A</variation>
    <location>
        <position position="207"/>
    </location>
</feature>
<feature type="helix" evidence="21">
    <location>
        <begin position="593"/>
        <end position="603"/>
    </location>
</feature>
<feature type="strand" evidence="21">
    <location>
        <begin position="626"/>
        <end position="629"/>
    </location>
</feature>
<feature type="helix" evidence="21">
    <location>
        <begin position="630"/>
        <end position="640"/>
    </location>
</feature>
<accession>P47043</accession>
<accession>D6VWC6</accession>
<name>ZAP1_YEAST</name>
<comment type="function">
    <text evidence="11 12 13 14">Transcription regulator controlling zinc-responsive gene expression. Binds to zinc-responsive elements (ZREs) (consensus sequence 5'-ACCYYNAAGGT-3') in the promoter of target genes (PubMed:9786867). Recruits SWI/SNF, SAGA, and Mediator complexes as coactivators in a zinc-responsive manner (PubMed:22950018). Involved in zinc ion homeostasis by zinc-responsive transcriptional regulation of the zinc uptake system genes ZTR1 and ZTR2 (PubMed:9271382). Positively regulates ETR1 expression, affecting mitochondrial function (PubMed:26711224).</text>
</comment>
<comment type="activity regulation">
    <text evidence="5">Active in zinc-limited cells and repressed in replete cells. Zinc controls ZAP1 DNA binding activity.</text>
</comment>
<comment type="subcellular location">
    <subcellularLocation>
        <location evidence="3 10">Nucleus</location>
    </subcellularLocation>
</comment>
<comment type="induction">
    <text evidence="13">Induced by zinc. Regulates transcription of its own promoter in response to zinc through a positive autoregulatory mechanism.</text>
</comment>
<comment type="domain">
    <text evidence="4 5 7 8 10">Uses 4 of its 7 zinc finger domains to contact the ZRE. 2 of these (ZF4 and ZF7) dominate the interaction by contacting the essential ACC--GGT ends, while the other 2 (ZF5 and ZF6) contact the 5 basepair central ZRE sequence. 2 zinc finger domains (ZF1 and ZF2) do not contact DNA, and a third ZF3 may be more important for interfinger protein-protein interactions (PubMed:12549926). ZF1 and ZF2 bind zinc in vitro but less stably than zinc fingers involved in DNA binding. ZF1 and ZF2 are critical for zinc regulation of activation domain 2 (AD2) and play a role in zinc sensing and consequent regulation of ZAP1 activity (PubMed:14517251). ZF1-ZF2 interactions stabilize the beta-beta-alpha folded repressed state of the ZF2 activation domain in the presence of cellular zinc excess (PubMed:16483601, PubMed:16720702). DNA binding is inhibited by zinc (PubMed:21799889).</text>
</comment>
<comment type="domain">
    <text evidence="6 9">Contains 2 zinc-responsive domains ZRD(AD1) and ZRD(AD2). Zinc binding to residues in ZRD(AD1) and ZRD(AD2) represses the activation function of AD1 and AD2, respectively.</text>
</comment>
<comment type="domain">
    <text evidence="9 11">Contains 2 activation domains, embedded within larger zinc-responsive domains (ZRDs), designated AD1 and AD2, which are regulated independently by zinc. AD1 plays the primary role in zinc-responsive gene regulation, whereas AD2 is required for maximal expression of only a few target genes (PubMed:21177862). AD2 recruits coactivators less effectively than AD1 and is therefore only functional on some promoters (PubMed:22950018). AD2 is also important for ZAP1 activity under heat stress conditions (PubMed:21177862).</text>
</comment>
<gene>
    <name type="primary">ZAP1</name>
    <name type="ordered locus">YJL056C</name>
    <name type="ORF">J1145</name>
</gene>
<protein>
    <recommendedName>
        <fullName>Zinc-responsive transcriptional regulator ZAP1</fullName>
    </recommendedName>
</protein>
<organism>
    <name type="scientific">Saccharomyces cerevisiae (strain ATCC 204508 / S288c)</name>
    <name type="common">Baker's yeast</name>
    <dbReference type="NCBI Taxonomy" id="559292"/>
    <lineage>
        <taxon>Eukaryota</taxon>
        <taxon>Fungi</taxon>
        <taxon>Dikarya</taxon>
        <taxon>Ascomycota</taxon>
        <taxon>Saccharomycotina</taxon>
        <taxon>Saccharomycetes</taxon>
        <taxon>Saccharomycetales</taxon>
        <taxon>Saccharomycetaceae</taxon>
        <taxon>Saccharomyces</taxon>
    </lineage>
</organism>
<proteinExistence type="evidence at protein level"/>